<proteinExistence type="inferred from homology"/>
<protein>
    <recommendedName>
        <fullName evidence="1">4-diphosphocytidyl-2-C-methyl-D-erythritol kinase</fullName>
        <shortName evidence="1">CMK</shortName>
        <ecNumber evidence="1">2.7.1.148</ecNumber>
    </recommendedName>
    <alternativeName>
        <fullName evidence="1">4-(cytidine-5'-diphospho)-2-C-methyl-D-erythritol kinase</fullName>
    </alternativeName>
</protein>
<reference key="1">
    <citation type="journal article" date="2009" name="BMC Genomics">
        <title>Conservation in the face of diversity: multistrain analysis of an intracellular bacterium.</title>
        <authorList>
            <person name="Dark M.J."/>
            <person name="Herndon D.R."/>
            <person name="Kappmeyer L.S."/>
            <person name="Gonzales M.P."/>
            <person name="Nordeen E."/>
            <person name="Palmer G.H."/>
            <person name="Knowles D.P. Jr."/>
            <person name="Brayton K.A."/>
        </authorList>
    </citation>
    <scope>NUCLEOTIDE SEQUENCE [LARGE SCALE GENOMIC DNA]</scope>
    <source>
        <strain>Florida</strain>
    </source>
</reference>
<feature type="chain" id="PRO_1000117874" description="4-diphosphocytidyl-2-C-methyl-D-erythritol kinase">
    <location>
        <begin position="1"/>
        <end position="289"/>
    </location>
</feature>
<feature type="active site" evidence="1">
    <location>
        <position position="15"/>
    </location>
</feature>
<feature type="active site" evidence="1">
    <location>
        <position position="140"/>
    </location>
</feature>
<feature type="binding site" evidence="1">
    <location>
        <begin position="100"/>
        <end position="110"/>
    </location>
    <ligand>
        <name>ATP</name>
        <dbReference type="ChEBI" id="CHEBI:30616"/>
    </ligand>
</feature>
<keyword id="KW-0067">ATP-binding</keyword>
<keyword id="KW-0414">Isoprene biosynthesis</keyword>
<keyword id="KW-0418">Kinase</keyword>
<keyword id="KW-0547">Nucleotide-binding</keyword>
<keyword id="KW-1185">Reference proteome</keyword>
<keyword id="KW-0808">Transferase</keyword>
<sequence>MQGVMSKYQINAPAKINLFLHVVGKSTSGYHVLESVFAFIKLYDTLEIEIGSKNRGVEFVQFSGISKHDNTVQRAIGHLVRRCAPGVAKNVYVKVTKNIPVSAGLAGGSADAAAIIRLLGKNWGISEAGMNGVAASVGSDVPVCLQSRTAFVCGMGENVKLLPHARLPNYVVLVRPNDVYLSTRSVFDAYACKEFSKSIGNPPEASDGLLSLVMQSRNDLTDTAILLVPEVKKILAELQSLGGCILSRMSGSGATCFALFEDGEAASDGVRYLKGRHPEWWVYETEISQ</sequence>
<organism>
    <name type="scientific">Anaplasma marginale (strain Florida)</name>
    <dbReference type="NCBI Taxonomy" id="320483"/>
    <lineage>
        <taxon>Bacteria</taxon>
        <taxon>Pseudomonadati</taxon>
        <taxon>Pseudomonadota</taxon>
        <taxon>Alphaproteobacteria</taxon>
        <taxon>Rickettsiales</taxon>
        <taxon>Anaplasmataceae</taxon>
        <taxon>Anaplasma</taxon>
    </lineage>
</organism>
<comment type="function">
    <text evidence="1">Catalyzes the phosphorylation of the position 2 hydroxy group of 4-diphosphocytidyl-2C-methyl-D-erythritol.</text>
</comment>
<comment type="catalytic activity">
    <reaction evidence="1">
        <text>4-CDP-2-C-methyl-D-erythritol + ATP = 4-CDP-2-C-methyl-D-erythritol 2-phosphate + ADP + H(+)</text>
        <dbReference type="Rhea" id="RHEA:18437"/>
        <dbReference type="ChEBI" id="CHEBI:15378"/>
        <dbReference type="ChEBI" id="CHEBI:30616"/>
        <dbReference type="ChEBI" id="CHEBI:57823"/>
        <dbReference type="ChEBI" id="CHEBI:57919"/>
        <dbReference type="ChEBI" id="CHEBI:456216"/>
        <dbReference type="EC" id="2.7.1.148"/>
    </reaction>
</comment>
<comment type="pathway">
    <text evidence="1">Isoprenoid biosynthesis; isopentenyl diphosphate biosynthesis via DXP pathway; isopentenyl diphosphate from 1-deoxy-D-xylulose 5-phosphate: step 3/6.</text>
</comment>
<comment type="similarity">
    <text evidence="1">Belongs to the GHMP kinase family. IspE subfamily.</text>
</comment>
<evidence type="ECO:0000255" key="1">
    <source>
        <dbReference type="HAMAP-Rule" id="MF_00061"/>
    </source>
</evidence>
<dbReference type="EC" id="2.7.1.148" evidence="1"/>
<dbReference type="EMBL" id="CP001079">
    <property type="protein sequence ID" value="ACM49231.1"/>
    <property type="molecule type" value="Genomic_DNA"/>
</dbReference>
<dbReference type="SMR" id="B9KIB9"/>
<dbReference type="STRING" id="320483.AMF_366"/>
<dbReference type="KEGG" id="amf:AMF_366"/>
<dbReference type="eggNOG" id="COG1947">
    <property type="taxonomic scope" value="Bacteria"/>
</dbReference>
<dbReference type="HOGENOM" id="CLU_053057_1_0_5"/>
<dbReference type="UniPathway" id="UPA00056">
    <property type="reaction ID" value="UER00094"/>
</dbReference>
<dbReference type="Proteomes" id="UP000007307">
    <property type="component" value="Chromosome"/>
</dbReference>
<dbReference type="GO" id="GO:0050515">
    <property type="term" value="F:4-(cytidine 5'-diphospho)-2-C-methyl-D-erythritol kinase activity"/>
    <property type="evidence" value="ECO:0007669"/>
    <property type="project" value="UniProtKB-UniRule"/>
</dbReference>
<dbReference type="GO" id="GO:0005524">
    <property type="term" value="F:ATP binding"/>
    <property type="evidence" value="ECO:0007669"/>
    <property type="project" value="UniProtKB-UniRule"/>
</dbReference>
<dbReference type="GO" id="GO:0019288">
    <property type="term" value="P:isopentenyl diphosphate biosynthetic process, methylerythritol 4-phosphate pathway"/>
    <property type="evidence" value="ECO:0007669"/>
    <property type="project" value="UniProtKB-UniRule"/>
</dbReference>
<dbReference type="GO" id="GO:0016114">
    <property type="term" value="P:terpenoid biosynthetic process"/>
    <property type="evidence" value="ECO:0007669"/>
    <property type="project" value="InterPro"/>
</dbReference>
<dbReference type="Gene3D" id="3.30.230.10">
    <property type="match status" value="1"/>
</dbReference>
<dbReference type="Gene3D" id="3.30.70.890">
    <property type="entry name" value="GHMP kinase, C-terminal domain"/>
    <property type="match status" value="1"/>
</dbReference>
<dbReference type="HAMAP" id="MF_00061">
    <property type="entry name" value="IspE"/>
    <property type="match status" value="1"/>
</dbReference>
<dbReference type="InterPro" id="IPR013750">
    <property type="entry name" value="GHMP_kinase_C_dom"/>
</dbReference>
<dbReference type="InterPro" id="IPR036554">
    <property type="entry name" value="GHMP_kinase_C_sf"/>
</dbReference>
<dbReference type="InterPro" id="IPR006204">
    <property type="entry name" value="GHMP_kinase_N_dom"/>
</dbReference>
<dbReference type="InterPro" id="IPR004424">
    <property type="entry name" value="IspE"/>
</dbReference>
<dbReference type="InterPro" id="IPR020568">
    <property type="entry name" value="Ribosomal_Su5_D2-typ_SF"/>
</dbReference>
<dbReference type="InterPro" id="IPR014721">
    <property type="entry name" value="Ribsml_uS5_D2-typ_fold_subgr"/>
</dbReference>
<dbReference type="NCBIfam" id="TIGR00154">
    <property type="entry name" value="ispE"/>
    <property type="match status" value="1"/>
</dbReference>
<dbReference type="NCBIfam" id="NF011202">
    <property type="entry name" value="PRK14608.1"/>
    <property type="match status" value="1"/>
</dbReference>
<dbReference type="PANTHER" id="PTHR43527">
    <property type="entry name" value="4-DIPHOSPHOCYTIDYL-2-C-METHYL-D-ERYTHRITOL KINASE, CHLOROPLASTIC"/>
    <property type="match status" value="1"/>
</dbReference>
<dbReference type="PANTHER" id="PTHR43527:SF2">
    <property type="entry name" value="4-DIPHOSPHOCYTIDYL-2-C-METHYL-D-ERYTHRITOL KINASE, CHLOROPLASTIC"/>
    <property type="match status" value="1"/>
</dbReference>
<dbReference type="Pfam" id="PF08544">
    <property type="entry name" value="GHMP_kinases_C"/>
    <property type="match status" value="1"/>
</dbReference>
<dbReference type="Pfam" id="PF00288">
    <property type="entry name" value="GHMP_kinases_N"/>
    <property type="match status" value="1"/>
</dbReference>
<dbReference type="PIRSF" id="PIRSF010376">
    <property type="entry name" value="IspE"/>
    <property type="match status" value="1"/>
</dbReference>
<dbReference type="SUPFAM" id="SSF55060">
    <property type="entry name" value="GHMP Kinase, C-terminal domain"/>
    <property type="match status" value="1"/>
</dbReference>
<dbReference type="SUPFAM" id="SSF54211">
    <property type="entry name" value="Ribosomal protein S5 domain 2-like"/>
    <property type="match status" value="1"/>
</dbReference>
<gene>
    <name evidence="1" type="primary">ispE</name>
    <name type="ordered locus">AMF_366</name>
</gene>
<name>ISPE_ANAMF</name>
<accession>B9KIB9</accession>